<dbReference type="EC" id="2.7.1.30" evidence="1"/>
<dbReference type="EMBL" id="BX293980">
    <property type="protein sequence ID" value="CAE76899.1"/>
    <property type="molecule type" value="Genomic_DNA"/>
</dbReference>
<dbReference type="RefSeq" id="NP_975257.1">
    <property type="nucleotide sequence ID" value="NC_005364.2"/>
</dbReference>
<dbReference type="RefSeq" id="WP_011166455.1">
    <property type="nucleotide sequence ID" value="NC_005364.2"/>
</dbReference>
<dbReference type="SMR" id="Q6MTY7"/>
<dbReference type="STRING" id="272632.MSC_0258"/>
<dbReference type="KEGG" id="mmy:MSC_0258"/>
<dbReference type="PATRIC" id="fig|272632.4.peg.279"/>
<dbReference type="eggNOG" id="COG0554">
    <property type="taxonomic scope" value="Bacteria"/>
</dbReference>
<dbReference type="HOGENOM" id="CLU_009281_2_3_14"/>
<dbReference type="UniPathway" id="UPA00618">
    <property type="reaction ID" value="UER00672"/>
</dbReference>
<dbReference type="Proteomes" id="UP000001016">
    <property type="component" value="Chromosome"/>
</dbReference>
<dbReference type="GO" id="GO:0005829">
    <property type="term" value="C:cytosol"/>
    <property type="evidence" value="ECO:0007669"/>
    <property type="project" value="TreeGrafter"/>
</dbReference>
<dbReference type="GO" id="GO:0005524">
    <property type="term" value="F:ATP binding"/>
    <property type="evidence" value="ECO:0007669"/>
    <property type="project" value="UniProtKB-UniRule"/>
</dbReference>
<dbReference type="GO" id="GO:0004370">
    <property type="term" value="F:glycerol kinase activity"/>
    <property type="evidence" value="ECO:0000250"/>
    <property type="project" value="UniProtKB"/>
</dbReference>
<dbReference type="GO" id="GO:0019563">
    <property type="term" value="P:glycerol catabolic process"/>
    <property type="evidence" value="ECO:0007669"/>
    <property type="project" value="UniProtKB-UniRule"/>
</dbReference>
<dbReference type="GO" id="GO:0006071">
    <property type="term" value="P:glycerol metabolic process"/>
    <property type="evidence" value="ECO:0000250"/>
    <property type="project" value="UniProtKB"/>
</dbReference>
<dbReference type="GO" id="GO:0006072">
    <property type="term" value="P:glycerol-3-phosphate metabolic process"/>
    <property type="evidence" value="ECO:0007669"/>
    <property type="project" value="InterPro"/>
</dbReference>
<dbReference type="CDD" id="cd07786">
    <property type="entry name" value="FGGY_EcGK_like"/>
    <property type="match status" value="1"/>
</dbReference>
<dbReference type="FunFam" id="3.30.420.40:FF:000007">
    <property type="entry name" value="Glycerol kinase"/>
    <property type="match status" value="1"/>
</dbReference>
<dbReference type="FunFam" id="3.30.420.40:FF:000008">
    <property type="entry name" value="Glycerol kinase"/>
    <property type="match status" value="1"/>
</dbReference>
<dbReference type="Gene3D" id="3.30.420.40">
    <property type="match status" value="2"/>
</dbReference>
<dbReference type="HAMAP" id="MF_00186">
    <property type="entry name" value="Glycerol_kin"/>
    <property type="match status" value="1"/>
</dbReference>
<dbReference type="InterPro" id="IPR043129">
    <property type="entry name" value="ATPase_NBD"/>
</dbReference>
<dbReference type="InterPro" id="IPR000577">
    <property type="entry name" value="Carb_kinase_FGGY"/>
</dbReference>
<dbReference type="InterPro" id="IPR018483">
    <property type="entry name" value="Carb_kinase_FGGY_CS"/>
</dbReference>
<dbReference type="InterPro" id="IPR018485">
    <property type="entry name" value="FGGY_C"/>
</dbReference>
<dbReference type="InterPro" id="IPR018484">
    <property type="entry name" value="FGGY_N"/>
</dbReference>
<dbReference type="InterPro" id="IPR005999">
    <property type="entry name" value="Glycerol_kin"/>
</dbReference>
<dbReference type="NCBIfam" id="TIGR01311">
    <property type="entry name" value="glycerol_kin"/>
    <property type="match status" value="1"/>
</dbReference>
<dbReference type="NCBIfam" id="NF000756">
    <property type="entry name" value="PRK00047.1"/>
    <property type="match status" value="1"/>
</dbReference>
<dbReference type="PANTHER" id="PTHR10196:SF69">
    <property type="entry name" value="GLYCEROL KINASE"/>
    <property type="match status" value="1"/>
</dbReference>
<dbReference type="PANTHER" id="PTHR10196">
    <property type="entry name" value="SUGAR KINASE"/>
    <property type="match status" value="1"/>
</dbReference>
<dbReference type="Pfam" id="PF02782">
    <property type="entry name" value="FGGY_C"/>
    <property type="match status" value="1"/>
</dbReference>
<dbReference type="Pfam" id="PF00370">
    <property type="entry name" value="FGGY_N"/>
    <property type="match status" value="1"/>
</dbReference>
<dbReference type="PIRSF" id="PIRSF000538">
    <property type="entry name" value="GlpK"/>
    <property type="match status" value="1"/>
</dbReference>
<dbReference type="SUPFAM" id="SSF53067">
    <property type="entry name" value="Actin-like ATPase domain"/>
    <property type="match status" value="2"/>
</dbReference>
<dbReference type="PROSITE" id="PS00933">
    <property type="entry name" value="FGGY_KINASES_1"/>
    <property type="match status" value="1"/>
</dbReference>
<dbReference type="PROSITE" id="PS00445">
    <property type="entry name" value="FGGY_KINASES_2"/>
    <property type="match status" value="1"/>
</dbReference>
<proteinExistence type="inferred from homology"/>
<keyword id="KW-0067">ATP-binding</keyword>
<keyword id="KW-0319">Glycerol metabolism</keyword>
<keyword id="KW-0418">Kinase</keyword>
<keyword id="KW-0547">Nucleotide-binding</keyword>
<keyword id="KW-1185">Reference proteome</keyword>
<keyword id="KW-0808">Transferase</keyword>
<reference key="1">
    <citation type="journal article" date="2004" name="Genome Res.">
        <title>The genome sequence of Mycoplasma mycoides subsp. mycoides SC type strain PG1T, the causative agent of contagious bovine pleuropneumonia (CBPP).</title>
        <authorList>
            <person name="Westberg J."/>
            <person name="Persson A."/>
            <person name="Holmberg A."/>
            <person name="Goesmann A."/>
            <person name="Lundeberg J."/>
            <person name="Johansson K.-E."/>
            <person name="Pettersson B."/>
            <person name="Uhlen M."/>
        </authorList>
    </citation>
    <scope>NUCLEOTIDE SEQUENCE [LARGE SCALE GENOMIC DNA]</scope>
    <source>
        <strain>CCUG 32753 / NCTC 10114 / PG1</strain>
    </source>
</reference>
<name>GLPK_MYCMS</name>
<gene>
    <name evidence="1" type="primary">glpK</name>
    <name type="ordered locus">MSC_0258</name>
</gene>
<feature type="chain" id="PRO_1000020747" description="Glycerol kinase">
    <location>
        <begin position="1"/>
        <end position="505"/>
    </location>
</feature>
<feature type="binding site" evidence="1">
    <location>
        <position position="15"/>
    </location>
    <ligand>
        <name>ADP</name>
        <dbReference type="ChEBI" id="CHEBI:456216"/>
    </ligand>
</feature>
<feature type="binding site" evidence="1">
    <location>
        <position position="15"/>
    </location>
    <ligand>
        <name>ATP</name>
        <dbReference type="ChEBI" id="CHEBI:30616"/>
    </ligand>
</feature>
<feature type="binding site" evidence="1">
    <location>
        <position position="15"/>
    </location>
    <ligand>
        <name>sn-glycerol 3-phosphate</name>
        <dbReference type="ChEBI" id="CHEBI:57597"/>
    </ligand>
</feature>
<feature type="binding site" evidence="1">
    <location>
        <position position="16"/>
    </location>
    <ligand>
        <name>ATP</name>
        <dbReference type="ChEBI" id="CHEBI:30616"/>
    </ligand>
</feature>
<feature type="binding site" evidence="1">
    <location>
        <position position="17"/>
    </location>
    <ligand>
        <name>ATP</name>
        <dbReference type="ChEBI" id="CHEBI:30616"/>
    </ligand>
</feature>
<feature type="binding site" evidence="1">
    <location>
        <position position="19"/>
    </location>
    <ligand>
        <name>ADP</name>
        <dbReference type="ChEBI" id="CHEBI:456216"/>
    </ligand>
</feature>
<feature type="binding site" evidence="1">
    <location>
        <position position="85"/>
    </location>
    <ligand>
        <name>glycerol</name>
        <dbReference type="ChEBI" id="CHEBI:17754"/>
    </ligand>
</feature>
<feature type="binding site" evidence="1">
    <location>
        <position position="85"/>
    </location>
    <ligand>
        <name>sn-glycerol 3-phosphate</name>
        <dbReference type="ChEBI" id="CHEBI:57597"/>
    </ligand>
</feature>
<feature type="binding site" evidence="1">
    <location>
        <position position="86"/>
    </location>
    <ligand>
        <name>glycerol</name>
        <dbReference type="ChEBI" id="CHEBI:17754"/>
    </ligand>
</feature>
<feature type="binding site" evidence="1">
    <location>
        <position position="86"/>
    </location>
    <ligand>
        <name>sn-glycerol 3-phosphate</name>
        <dbReference type="ChEBI" id="CHEBI:57597"/>
    </ligand>
</feature>
<feature type="binding site" evidence="1">
    <location>
        <position position="136"/>
    </location>
    <ligand>
        <name>glycerol</name>
        <dbReference type="ChEBI" id="CHEBI:17754"/>
    </ligand>
</feature>
<feature type="binding site" evidence="1">
    <location>
        <position position="136"/>
    </location>
    <ligand>
        <name>sn-glycerol 3-phosphate</name>
        <dbReference type="ChEBI" id="CHEBI:57597"/>
    </ligand>
</feature>
<feature type="binding site" evidence="1">
    <location>
        <position position="249"/>
    </location>
    <ligand>
        <name>glycerol</name>
        <dbReference type="ChEBI" id="CHEBI:17754"/>
    </ligand>
</feature>
<feature type="binding site" evidence="1">
    <location>
        <position position="249"/>
    </location>
    <ligand>
        <name>sn-glycerol 3-phosphate</name>
        <dbReference type="ChEBI" id="CHEBI:57597"/>
    </ligand>
</feature>
<feature type="binding site" evidence="1">
    <location>
        <position position="250"/>
    </location>
    <ligand>
        <name>glycerol</name>
        <dbReference type="ChEBI" id="CHEBI:17754"/>
    </ligand>
</feature>
<feature type="binding site" evidence="1">
    <location>
        <position position="271"/>
    </location>
    <ligand>
        <name>ADP</name>
        <dbReference type="ChEBI" id="CHEBI:456216"/>
    </ligand>
</feature>
<feature type="binding site" evidence="1">
    <location>
        <position position="271"/>
    </location>
    <ligand>
        <name>ATP</name>
        <dbReference type="ChEBI" id="CHEBI:30616"/>
    </ligand>
</feature>
<feature type="binding site" evidence="1">
    <location>
        <position position="314"/>
    </location>
    <ligand>
        <name>ADP</name>
        <dbReference type="ChEBI" id="CHEBI:456216"/>
    </ligand>
</feature>
<feature type="binding site" evidence="1">
    <location>
        <position position="314"/>
    </location>
    <ligand>
        <name>ATP</name>
        <dbReference type="ChEBI" id="CHEBI:30616"/>
    </ligand>
</feature>
<feature type="binding site" evidence="1">
    <location>
        <position position="318"/>
    </location>
    <ligand>
        <name>ATP</name>
        <dbReference type="ChEBI" id="CHEBI:30616"/>
    </ligand>
</feature>
<feature type="binding site" evidence="1">
    <location>
        <position position="415"/>
    </location>
    <ligand>
        <name>ADP</name>
        <dbReference type="ChEBI" id="CHEBI:456216"/>
    </ligand>
</feature>
<feature type="binding site" evidence="1">
    <location>
        <position position="415"/>
    </location>
    <ligand>
        <name>ATP</name>
        <dbReference type="ChEBI" id="CHEBI:30616"/>
    </ligand>
</feature>
<feature type="binding site" evidence="1">
    <location>
        <position position="419"/>
    </location>
    <ligand>
        <name>ADP</name>
        <dbReference type="ChEBI" id="CHEBI:456216"/>
    </ligand>
</feature>
<accession>Q6MTY7</accession>
<evidence type="ECO:0000255" key="1">
    <source>
        <dbReference type="HAMAP-Rule" id="MF_00186"/>
    </source>
</evidence>
<organism>
    <name type="scientific">Mycoplasma mycoides subsp. mycoides SC (strain CCUG 32753 / NCTC 10114 / PG1)</name>
    <dbReference type="NCBI Taxonomy" id="272632"/>
    <lineage>
        <taxon>Bacteria</taxon>
        <taxon>Bacillati</taxon>
        <taxon>Mycoplasmatota</taxon>
        <taxon>Mollicutes</taxon>
        <taxon>Mycoplasmataceae</taxon>
        <taxon>Mycoplasma</taxon>
    </lineage>
</organism>
<sequence>MTDSKKYILTLDEGTTSARALITDKQGNIIAVEQSEFTQYFPKEGWVEHDAIEIWNTQRSALVQVLNKSGIDPSQIEAIGITNQRETAVIWNKETGLPIYNAIVWQDQRTADYCQTFDKDTLEMVKQRSGLIINPYFSGTKVKWILDNVPNARQLAKEGKLMFGTINTWLIYRLTGGEVFVTDHTNAQRTLLYNIHTNDWDDELLKLFDIPRNILPEIKSCSEVYGYTFKGLFSKGNEQRIKIASSIGDQQSALFGQLCLEKGQVKVTYGTGCFILTNTGEEIVKSNHGLLTTVAYSFKDKVYYALEGSVMIAGAAVQWLRDNLRIVYNAIETEWYADQVKDDRRVYVVPSFTGLGSPYWDSFSRGAIFGLDRGTRREHIVRATLEAIVYQANDVVDAMRKDMKKPIEIFKVDGGAANNKFLMQFQSNISQSKVIKPTNVETTAMGAAFMVGLAVGYWENAEELKKTYKVHFELTPELSKPEVDKLIKGWKVAVQRTFKWVEEIE</sequence>
<comment type="function">
    <text evidence="1">Key enzyme in the regulation of glycerol uptake and metabolism. Catalyzes the phosphorylation of glycerol to yield sn-glycerol 3-phosphate.</text>
</comment>
<comment type="catalytic activity">
    <reaction evidence="1">
        <text>glycerol + ATP = sn-glycerol 3-phosphate + ADP + H(+)</text>
        <dbReference type="Rhea" id="RHEA:21644"/>
        <dbReference type="ChEBI" id="CHEBI:15378"/>
        <dbReference type="ChEBI" id="CHEBI:17754"/>
        <dbReference type="ChEBI" id="CHEBI:30616"/>
        <dbReference type="ChEBI" id="CHEBI:57597"/>
        <dbReference type="ChEBI" id="CHEBI:456216"/>
        <dbReference type="EC" id="2.7.1.30"/>
    </reaction>
</comment>
<comment type="activity regulation">
    <text evidence="1">Inhibited by fructose 1,6-bisphosphate (FBP).</text>
</comment>
<comment type="pathway">
    <text evidence="1">Polyol metabolism; glycerol degradation via glycerol kinase pathway; sn-glycerol 3-phosphate from glycerol: step 1/1.</text>
</comment>
<comment type="similarity">
    <text evidence="1">Belongs to the FGGY kinase family.</text>
</comment>
<protein>
    <recommendedName>
        <fullName evidence="1">Glycerol kinase</fullName>
        <ecNumber evidence="1">2.7.1.30</ecNumber>
    </recommendedName>
    <alternativeName>
        <fullName evidence="1">ATP:glycerol 3-phosphotransferase</fullName>
    </alternativeName>
    <alternativeName>
        <fullName evidence="1">Glycerokinase</fullName>
        <shortName evidence="1">GK</shortName>
    </alternativeName>
</protein>